<accession>B6IRR1</accession>
<protein>
    <recommendedName>
        <fullName evidence="1">Large ribosomal subunit protein uL22</fullName>
    </recommendedName>
    <alternativeName>
        <fullName evidence="2">50S ribosomal protein L22</fullName>
    </alternativeName>
</protein>
<keyword id="KW-1185">Reference proteome</keyword>
<keyword id="KW-0687">Ribonucleoprotein</keyword>
<keyword id="KW-0689">Ribosomal protein</keyword>
<keyword id="KW-0694">RNA-binding</keyword>
<keyword id="KW-0699">rRNA-binding</keyword>
<organism>
    <name type="scientific">Rhodospirillum centenum (strain ATCC 51521 / SW)</name>
    <dbReference type="NCBI Taxonomy" id="414684"/>
    <lineage>
        <taxon>Bacteria</taxon>
        <taxon>Pseudomonadati</taxon>
        <taxon>Pseudomonadota</taxon>
        <taxon>Alphaproteobacteria</taxon>
        <taxon>Rhodospirillales</taxon>
        <taxon>Rhodospirillaceae</taxon>
        <taxon>Rhodospirillum</taxon>
    </lineage>
</organism>
<proteinExistence type="inferred from homology"/>
<comment type="function">
    <text evidence="1">This protein binds specifically to 23S rRNA; its binding is stimulated by other ribosomal proteins, e.g. L4, L17, and L20. It is important during the early stages of 50S assembly. It makes multiple contacts with different domains of the 23S rRNA in the assembled 50S subunit and ribosome (By similarity).</text>
</comment>
<comment type="function">
    <text evidence="1">The globular domain of the protein is located near the polypeptide exit tunnel on the outside of the subunit, while an extended beta-hairpin is found that lines the wall of the exit tunnel in the center of the 70S ribosome.</text>
</comment>
<comment type="subunit">
    <text evidence="1">Part of the 50S ribosomal subunit.</text>
</comment>
<comment type="similarity">
    <text evidence="1">Belongs to the universal ribosomal protein uL22 family.</text>
</comment>
<sequence length="132" mass="14668">MGKPAAERRLSENEAQAFARLIRSSPRKLNLVAQLIRGKAAGEALALLTFSKRRVAGEVKKVLQSAIANAENNHQLDVDRLYVSHATVGRALVMKRFHARARGRGARVEKWFSNLTVVVRERADEPVQEAAE</sequence>
<gene>
    <name evidence="1" type="primary">rplV</name>
    <name type="ordered locus">RC1_0716</name>
</gene>
<name>RL22_RHOCS</name>
<evidence type="ECO:0000255" key="1">
    <source>
        <dbReference type="HAMAP-Rule" id="MF_01331"/>
    </source>
</evidence>
<evidence type="ECO:0000305" key="2"/>
<reference key="1">
    <citation type="submission" date="2007-03" db="EMBL/GenBank/DDBJ databases">
        <title>Genome sequence of Rhodospirillum centenum.</title>
        <authorList>
            <person name="Touchman J.W."/>
            <person name="Bauer C."/>
            <person name="Blankenship R.E."/>
        </authorList>
    </citation>
    <scope>NUCLEOTIDE SEQUENCE [LARGE SCALE GENOMIC DNA]</scope>
    <source>
        <strain>ATCC 51521 / SW</strain>
    </source>
</reference>
<feature type="chain" id="PRO_1000142299" description="Large ribosomal subunit protein uL22">
    <location>
        <begin position="1"/>
        <end position="132"/>
    </location>
</feature>
<dbReference type="EMBL" id="CP000613">
    <property type="protein sequence ID" value="ACI98147.1"/>
    <property type="molecule type" value="Genomic_DNA"/>
</dbReference>
<dbReference type="RefSeq" id="WP_012565938.1">
    <property type="nucleotide sequence ID" value="NC_011420.2"/>
</dbReference>
<dbReference type="SMR" id="B6IRR1"/>
<dbReference type="STRING" id="414684.RC1_0716"/>
<dbReference type="KEGG" id="rce:RC1_0716"/>
<dbReference type="eggNOG" id="COG0091">
    <property type="taxonomic scope" value="Bacteria"/>
</dbReference>
<dbReference type="HOGENOM" id="CLU_083987_3_0_5"/>
<dbReference type="OrthoDB" id="9805969at2"/>
<dbReference type="Proteomes" id="UP000001591">
    <property type="component" value="Chromosome"/>
</dbReference>
<dbReference type="GO" id="GO:0022625">
    <property type="term" value="C:cytosolic large ribosomal subunit"/>
    <property type="evidence" value="ECO:0007669"/>
    <property type="project" value="TreeGrafter"/>
</dbReference>
<dbReference type="GO" id="GO:0019843">
    <property type="term" value="F:rRNA binding"/>
    <property type="evidence" value="ECO:0007669"/>
    <property type="project" value="UniProtKB-UniRule"/>
</dbReference>
<dbReference type="GO" id="GO:0003735">
    <property type="term" value="F:structural constituent of ribosome"/>
    <property type="evidence" value="ECO:0007669"/>
    <property type="project" value="InterPro"/>
</dbReference>
<dbReference type="GO" id="GO:0006412">
    <property type="term" value="P:translation"/>
    <property type="evidence" value="ECO:0007669"/>
    <property type="project" value="UniProtKB-UniRule"/>
</dbReference>
<dbReference type="CDD" id="cd00336">
    <property type="entry name" value="Ribosomal_L22"/>
    <property type="match status" value="1"/>
</dbReference>
<dbReference type="Gene3D" id="3.90.470.10">
    <property type="entry name" value="Ribosomal protein L22/L17"/>
    <property type="match status" value="1"/>
</dbReference>
<dbReference type="HAMAP" id="MF_01331_B">
    <property type="entry name" value="Ribosomal_uL22_B"/>
    <property type="match status" value="1"/>
</dbReference>
<dbReference type="InterPro" id="IPR001063">
    <property type="entry name" value="Ribosomal_uL22"/>
</dbReference>
<dbReference type="InterPro" id="IPR005727">
    <property type="entry name" value="Ribosomal_uL22_bac/chlpt-type"/>
</dbReference>
<dbReference type="InterPro" id="IPR047867">
    <property type="entry name" value="Ribosomal_uL22_bac/org-type"/>
</dbReference>
<dbReference type="InterPro" id="IPR018260">
    <property type="entry name" value="Ribosomal_uL22_CS"/>
</dbReference>
<dbReference type="InterPro" id="IPR036394">
    <property type="entry name" value="Ribosomal_uL22_sf"/>
</dbReference>
<dbReference type="NCBIfam" id="TIGR01044">
    <property type="entry name" value="rplV_bact"/>
    <property type="match status" value="1"/>
</dbReference>
<dbReference type="PANTHER" id="PTHR13501">
    <property type="entry name" value="CHLOROPLAST 50S RIBOSOMAL PROTEIN L22-RELATED"/>
    <property type="match status" value="1"/>
</dbReference>
<dbReference type="PANTHER" id="PTHR13501:SF8">
    <property type="entry name" value="LARGE RIBOSOMAL SUBUNIT PROTEIN UL22M"/>
    <property type="match status" value="1"/>
</dbReference>
<dbReference type="Pfam" id="PF00237">
    <property type="entry name" value="Ribosomal_L22"/>
    <property type="match status" value="1"/>
</dbReference>
<dbReference type="SUPFAM" id="SSF54843">
    <property type="entry name" value="Ribosomal protein L22"/>
    <property type="match status" value="1"/>
</dbReference>
<dbReference type="PROSITE" id="PS00464">
    <property type="entry name" value="RIBOSOMAL_L22"/>
    <property type="match status" value="1"/>
</dbReference>